<sequence length="273" mass="28771">MHDANIRVAIAGAGGRMGRQLIQAALALEGVQLGAALEREGSSLLGSDAGELAGAGKTGVTVQSSLDAIKDDFDVFIDFTRPEGTLNHLAFCRQHGKGMVIGTTGFDEAGKQAIRDAAADIAIVFAANFSVGVNVMLKLLEKAAKVMGDYTDIEIIEAHHRHKVDAPSGTALAMGEAIAHALDKDLKDCAVYSREGHTGERVPGTIGFATVRAGDIVGEHTAMFADIGERLEITHKASSRMTFANGAVRSALWLSGKESGLFDMRDVLDLNNL</sequence>
<evidence type="ECO:0000255" key="1">
    <source>
        <dbReference type="HAMAP-Rule" id="MF_00102"/>
    </source>
</evidence>
<evidence type="ECO:0000305" key="2"/>
<feature type="chain" id="PRO_1000117372" description="4-hydroxy-tetrahydrodipicolinate reductase">
    <location>
        <begin position="1"/>
        <end position="273"/>
    </location>
</feature>
<feature type="active site" description="Proton donor/acceptor" evidence="1">
    <location>
        <position position="159"/>
    </location>
</feature>
<feature type="active site" description="Proton donor" evidence="1">
    <location>
        <position position="163"/>
    </location>
</feature>
<feature type="binding site" evidence="1">
    <location>
        <begin position="12"/>
        <end position="17"/>
    </location>
    <ligand>
        <name>NAD(+)</name>
        <dbReference type="ChEBI" id="CHEBI:57540"/>
    </ligand>
</feature>
<feature type="binding site" evidence="1">
    <location>
        <position position="38"/>
    </location>
    <ligand>
        <name>NAD(+)</name>
        <dbReference type="ChEBI" id="CHEBI:57540"/>
    </ligand>
</feature>
<feature type="binding site" evidence="1">
    <location>
        <position position="39"/>
    </location>
    <ligand>
        <name>NADP(+)</name>
        <dbReference type="ChEBI" id="CHEBI:58349"/>
    </ligand>
</feature>
<feature type="binding site" evidence="1">
    <location>
        <begin position="102"/>
        <end position="104"/>
    </location>
    <ligand>
        <name>NAD(+)</name>
        <dbReference type="ChEBI" id="CHEBI:57540"/>
    </ligand>
</feature>
<feature type="binding site" evidence="1">
    <location>
        <begin position="126"/>
        <end position="129"/>
    </location>
    <ligand>
        <name>NAD(+)</name>
        <dbReference type="ChEBI" id="CHEBI:57540"/>
    </ligand>
</feature>
<feature type="binding site" evidence="1">
    <location>
        <position position="160"/>
    </location>
    <ligand>
        <name>(S)-2,3,4,5-tetrahydrodipicolinate</name>
        <dbReference type="ChEBI" id="CHEBI:16845"/>
    </ligand>
</feature>
<feature type="binding site" evidence="1">
    <location>
        <begin position="169"/>
        <end position="170"/>
    </location>
    <ligand>
        <name>(S)-2,3,4,5-tetrahydrodipicolinate</name>
        <dbReference type="ChEBI" id="CHEBI:16845"/>
    </ligand>
</feature>
<dbReference type="EC" id="1.17.1.8" evidence="1"/>
<dbReference type="EMBL" id="CP000970">
    <property type="protein sequence ID" value="ACB18767.1"/>
    <property type="molecule type" value="Genomic_DNA"/>
</dbReference>
<dbReference type="RefSeq" id="WP_000543585.1">
    <property type="nucleotide sequence ID" value="NC_010498.1"/>
</dbReference>
<dbReference type="SMR" id="B1LFW1"/>
<dbReference type="KEGG" id="ecm:EcSMS35_0029"/>
<dbReference type="HOGENOM" id="CLU_047479_2_1_6"/>
<dbReference type="UniPathway" id="UPA00034">
    <property type="reaction ID" value="UER00018"/>
</dbReference>
<dbReference type="Proteomes" id="UP000007011">
    <property type="component" value="Chromosome"/>
</dbReference>
<dbReference type="GO" id="GO:0005829">
    <property type="term" value="C:cytosol"/>
    <property type="evidence" value="ECO:0007669"/>
    <property type="project" value="TreeGrafter"/>
</dbReference>
<dbReference type="GO" id="GO:0008839">
    <property type="term" value="F:4-hydroxy-tetrahydrodipicolinate reductase"/>
    <property type="evidence" value="ECO:0007669"/>
    <property type="project" value="UniProtKB-EC"/>
</dbReference>
<dbReference type="GO" id="GO:0051287">
    <property type="term" value="F:NAD binding"/>
    <property type="evidence" value="ECO:0007669"/>
    <property type="project" value="UniProtKB-UniRule"/>
</dbReference>
<dbReference type="GO" id="GO:0050661">
    <property type="term" value="F:NADP binding"/>
    <property type="evidence" value="ECO:0007669"/>
    <property type="project" value="UniProtKB-UniRule"/>
</dbReference>
<dbReference type="GO" id="GO:0016726">
    <property type="term" value="F:oxidoreductase activity, acting on CH or CH2 groups, NAD or NADP as acceptor"/>
    <property type="evidence" value="ECO:0007669"/>
    <property type="project" value="UniProtKB-UniRule"/>
</dbReference>
<dbReference type="GO" id="GO:0019877">
    <property type="term" value="P:diaminopimelate biosynthetic process"/>
    <property type="evidence" value="ECO:0007669"/>
    <property type="project" value="UniProtKB-UniRule"/>
</dbReference>
<dbReference type="GO" id="GO:0009089">
    <property type="term" value="P:lysine biosynthetic process via diaminopimelate"/>
    <property type="evidence" value="ECO:0007669"/>
    <property type="project" value="UniProtKB-UniRule"/>
</dbReference>
<dbReference type="CDD" id="cd02274">
    <property type="entry name" value="DHDPR_N"/>
    <property type="match status" value="1"/>
</dbReference>
<dbReference type="FunFam" id="3.30.360.10:FF:000004">
    <property type="entry name" value="4-hydroxy-tetrahydrodipicolinate reductase"/>
    <property type="match status" value="1"/>
</dbReference>
<dbReference type="FunFam" id="3.40.50.720:FF:000048">
    <property type="entry name" value="4-hydroxy-tetrahydrodipicolinate reductase"/>
    <property type="match status" value="1"/>
</dbReference>
<dbReference type="Gene3D" id="3.30.360.10">
    <property type="entry name" value="Dihydrodipicolinate Reductase, domain 2"/>
    <property type="match status" value="1"/>
</dbReference>
<dbReference type="Gene3D" id="3.40.50.720">
    <property type="entry name" value="NAD(P)-binding Rossmann-like Domain"/>
    <property type="match status" value="1"/>
</dbReference>
<dbReference type="HAMAP" id="MF_00102">
    <property type="entry name" value="DapB"/>
    <property type="match status" value="1"/>
</dbReference>
<dbReference type="InterPro" id="IPR022663">
    <property type="entry name" value="DapB_C"/>
</dbReference>
<dbReference type="InterPro" id="IPR000846">
    <property type="entry name" value="DapB_N"/>
</dbReference>
<dbReference type="InterPro" id="IPR022664">
    <property type="entry name" value="DapB_N_CS"/>
</dbReference>
<dbReference type="InterPro" id="IPR023940">
    <property type="entry name" value="DHDPR_bac"/>
</dbReference>
<dbReference type="InterPro" id="IPR036291">
    <property type="entry name" value="NAD(P)-bd_dom_sf"/>
</dbReference>
<dbReference type="NCBIfam" id="TIGR00036">
    <property type="entry name" value="dapB"/>
    <property type="match status" value="1"/>
</dbReference>
<dbReference type="PANTHER" id="PTHR20836:SF0">
    <property type="entry name" value="4-HYDROXY-TETRAHYDRODIPICOLINATE REDUCTASE 1, CHLOROPLASTIC-RELATED"/>
    <property type="match status" value="1"/>
</dbReference>
<dbReference type="PANTHER" id="PTHR20836">
    <property type="entry name" value="DIHYDRODIPICOLINATE REDUCTASE"/>
    <property type="match status" value="1"/>
</dbReference>
<dbReference type="Pfam" id="PF05173">
    <property type="entry name" value="DapB_C"/>
    <property type="match status" value="1"/>
</dbReference>
<dbReference type="Pfam" id="PF01113">
    <property type="entry name" value="DapB_N"/>
    <property type="match status" value="1"/>
</dbReference>
<dbReference type="PIRSF" id="PIRSF000161">
    <property type="entry name" value="DHPR"/>
    <property type="match status" value="1"/>
</dbReference>
<dbReference type="SUPFAM" id="SSF55347">
    <property type="entry name" value="Glyceraldehyde-3-phosphate dehydrogenase-like, C-terminal domain"/>
    <property type="match status" value="1"/>
</dbReference>
<dbReference type="SUPFAM" id="SSF51735">
    <property type="entry name" value="NAD(P)-binding Rossmann-fold domains"/>
    <property type="match status" value="1"/>
</dbReference>
<dbReference type="PROSITE" id="PS01298">
    <property type="entry name" value="DAPB"/>
    <property type="match status" value="1"/>
</dbReference>
<reference key="1">
    <citation type="journal article" date="2008" name="J. Bacteriol.">
        <title>Insights into the environmental resistance gene pool from the genome sequence of the multidrug-resistant environmental isolate Escherichia coli SMS-3-5.</title>
        <authorList>
            <person name="Fricke W.F."/>
            <person name="Wright M.S."/>
            <person name="Lindell A.H."/>
            <person name="Harkins D.M."/>
            <person name="Baker-Austin C."/>
            <person name="Ravel J."/>
            <person name="Stepanauskas R."/>
        </authorList>
    </citation>
    <scope>NUCLEOTIDE SEQUENCE [LARGE SCALE GENOMIC DNA]</scope>
    <source>
        <strain>SMS-3-5 / SECEC</strain>
    </source>
</reference>
<keyword id="KW-0028">Amino-acid biosynthesis</keyword>
<keyword id="KW-0963">Cytoplasm</keyword>
<keyword id="KW-0220">Diaminopimelate biosynthesis</keyword>
<keyword id="KW-0457">Lysine biosynthesis</keyword>
<keyword id="KW-0520">NAD</keyword>
<keyword id="KW-0521">NADP</keyword>
<keyword id="KW-0560">Oxidoreductase</keyword>
<gene>
    <name evidence="1" type="primary">dapB</name>
    <name type="ordered locus">EcSMS35_0029</name>
</gene>
<name>DAPB_ECOSM</name>
<accession>B1LFW1</accession>
<comment type="function">
    <text evidence="1">Catalyzes the conversion of 4-hydroxy-tetrahydrodipicolinate (HTPA) to tetrahydrodipicolinate.</text>
</comment>
<comment type="catalytic activity">
    <reaction evidence="1">
        <text>(S)-2,3,4,5-tetrahydrodipicolinate + NAD(+) + H2O = (2S,4S)-4-hydroxy-2,3,4,5-tetrahydrodipicolinate + NADH + H(+)</text>
        <dbReference type="Rhea" id="RHEA:35323"/>
        <dbReference type="ChEBI" id="CHEBI:15377"/>
        <dbReference type="ChEBI" id="CHEBI:15378"/>
        <dbReference type="ChEBI" id="CHEBI:16845"/>
        <dbReference type="ChEBI" id="CHEBI:57540"/>
        <dbReference type="ChEBI" id="CHEBI:57945"/>
        <dbReference type="ChEBI" id="CHEBI:67139"/>
        <dbReference type="EC" id="1.17.1.8"/>
    </reaction>
</comment>
<comment type="catalytic activity">
    <reaction evidence="1">
        <text>(S)-2,3,4,5-tetrahydrodipicolinate + NADP(+) + H2O = (2S,4S)-4-hydroxy-2,3,4,5-tetrahydrodipicolinate + NADPH + H(+)</text>
        <dbReference type="Rhea" id="RHEA:35331"/>
        <dbReference type="ChEBI" id="CHEBI:15377"/>
        <dbReference type="ChEBI" id="CHEBI:15378"/>
        <dbReference type="ChEBI" id="CHEBI:16845"/>
        <dbReference type="ChEBI" id="CHEBI:57783"/>
        <dbReference type="ChEBI" id="CHEBI:58349"/>
        <dbReference type="ChEBI" id="CHEBI:67139"/>
        <dbReference type="EC" id="1.17.1.8"/>
    </reaction>
</comment>
<comment type="pathway">
    <text evidence="1">Amino-acid biosynthesis; L-lysine biosynthesis via DAP pathway; (S)-tetrahydrodipicolinate from L-aspartate: step 4/4.</text>
</comment>
<comment type="subunit">
    <text evidence="1">Homotetramer.</text>
</comment>
<comment type="subcellular location">
    <subcellularLocation>
        <location evidence="1">Cytoplasm</location>
    </subcellularLocation>
</comment>
<comment type="similarity">
    <text evidence="1">Belongs to the DapB family.</text>
</comment>
<comment type="caution">
    <text evidence="2">Was originally thought to be a dihydrodipicolinate reductase (DHDPR), catalyzing the conversion of dihydrodipicolinate to tetrahydrodipicolinate. However, it was shown in E.coli that the substrate of the enzymatic reaction is not dihydrodipicolinate (DHDP) but in fact (2S,4S)-4-hydroxy-2,3,4,5-tetrahydrodipicolinic acid (HTPA), the product released by the DapA-catalyzed reaction.</text>
</comment>
<proteinExistence type="inferred from homology"/>
<organism>
    <name type="scientific">Escherichia coli (strain SMS-3-5 / SECEC)</name>
    <dbReference type="NCBI Taxonomy" id="439855"/>
    <lineage>
        <taxon>Bacteria</taxon>
        <taxon>Pseudomonadati</taxon>
        <taxon>Pseudomonadota</taxon>
        <taxon>Gammaproteobacteria</taxon>
        <taxon>Enterobacterales</taxon>
        <taxon>Enterobacteriaceae</taxon>
        <taxon>Escherichia</taxon>
    </lineage>
</organism>
<protein>
    <recommendedName>
        <fullName evidence="1">4-hydroxy-tetrahydrodipicolinate reductase</fullName>
        <shortName evidence="1">HTPA reductase</shortName>
        <ecNumber evidence="1">1.17.1.8</ecNumber>
    </recommendedName>
</protein>